<sequence length="311" mass="33901">MECKRARAYSSSANLGSGFDILSMAHTAFFDTVEICVETKNSENIVIESNSKIPLEPNRNSATYPLVRIMEERGIKASLRVKVIKGIPEGLGLGSSGASATAAVMAFSSLFNLNLSKEDLVRYAMYGEIASSGSPHPDNVAASVFGGVVSVVSVNPVKVVEIPLNYSFNILLFVPLNIHIEEKTKKAREMVPKTVKLSDYINNSRYISSLLIGFVKGERDLIRLGLNDEIVEKARLPLFPYYPKIKEIAIKYDAVGSCVSGAGPSILVLTDKMTDENKIAEEGTKTCNEFNVECEVIKAKIAGGVEVERRN</sequence>
<protein>
    <recommendedName>
        <fullName evidence="1">Homoserine kinase</fullName>
        <shortName evidence="1">HK</shortName>
        <shortName evidence="1">HSK</shortName>
        <ecNumber evidence="1">2.7.1.39</ecNumber>
    </recommendedName>
</protein>
<gene>
    <name evidence="1" type="primary">thrB</name>
    <name type="ordered locus">YG5714_0168</name>
</gene>
<dbReference type="EC" id="2.7.1.39" evidence="1"/>
<dbReference type="EMBL" id="CP001403">
    <property type="protein sequence ID" value="ACP44461.1"/>
    <property type="molecule type" value="Genomic_DNA"/>
</dbReference>
<dbReference type="RefSeq" id="WP_012715452.1">
    <property type="nucleotide sequence ID" value="NC_012622.1"/>
</dbReference>
<dbReference type="SMR" id="C3N8M1"/>
<dbReference type="GeneID" id="7808367"/>
<dbReference type="KEGG" id="siy:YG5714_0168"/>
<dbReference type="HOGENOM" id="CLU_041243_1_1_2"/>
<dbReference type="UniPathway" id="UPA00050">
    <property type="reaction ID" value="UER00064"/>
</dbReference>
<dbReference type="Proteomes" id="UP000002308">
    <property type="component" value="Chromosome"/>
</dbReference>
<dbReference type="GO" id="GO:0005737">
    <property type="term" value="C:cytoplasm"/>
    <property type="evidence" value="ECO:0007669"/>
    <property type="project" value="UniProtKB-SubCell"/>
</dbReference>
<dbReference type="GO" id="GO:0005524">
    <property type="term" value="F:ATP binding"/>
    <property type="evidence" value="ECO:0007669"/>
    <property type="project" value="UniProtKB-UniRule"/>
</dbReference>
<dbReference type="GO" id="GO:0004413">
    <property type="term" value="F:homoserine kinase activity"/>
    <property type="evidence" value="ECO:0007669"/>
    <property type="project" value="UniProtKB-UniRule"/>
</dbReference>
<dbReference type="GO" id="GO:0009088">
    <property type="term" value="P:threonine biosynthetic process"/>
    <property type="evidence" value="ECO:0007669"/>
    <property type="project" value="UniProtKB-UniRule"/>
</dbReference>
<dbReference type="Gene3D" id="3.30.230.10">
    <property type="match status" value="1"/>
</dbReference>
<dbReference type="Gene3D" id="3.30.70.890">
    <property type="entry name" value="GHMP kinase, C-terminal domain"/>
    <property type="match status" value="1"/>
</dbReference>
<dbReference type="HAMAP" id="MF_00384">
    <property type="entry name" value="Homoser_kinase"/>
    <property type="match status" value="1"/>
</dbReference>
<dbReference type="InterPro" id="IPR013750">
    <property type="entry name" value="GHMP_kinase_C_dom"/>
</dbReference>
<dbReference type="InterPro" id="IPR036554">
    <property type="entry name" value="GHMP_kinase_C_sf"/>
</dbReference>
<dbReference type="InterPro" id="IPR006204">
    <property type="entry name" value="GHMP_kinase_N_dom"/>
</dbReference>
<dbReference type="InterPro" id="IPR006203">
    <property type="entry name" value="GHMP_knse_ATP-bd_CS"/>
</dbReference>
<dbReference type="InterPro" id="IPR000870">
    <property type="entry name" value="Homoserine_kinase"/>
</dbReference>
<dbReference type="InterPro" id="IPR020568">
    <property type="entry name" value="Ribosomal_Su5_D2-typ_SF"/>
</dbReference>
<dbReference type="InterPro" id="IPR014721">
    <property type="entry name" value="Ribsml_uS5_D2-typ_fold_subgr"/>
</dbReference>
<dbReference type="NCBIfam" id="NF002288">
    <property type="entry name" value="PRK01212.1-4"/>
    <property type="match status" value="1"/>
</dbReference>
<dbReference type="NCBIfam" id="TIGR00191">
    <property type="entry name" value="thrB"/>
    <property type="match status" value="1"/>
</dbReference>
<dbReference type="PANTHER" id="PTHR20861:SF1">
    <property type="entry name" value="HOMOSERINE KINASE"/>
    <property type="match status" value="1"/>
</dbReference>
<dbReference type="PANTHER" id="PTHR20861">
    <property type="entry name" value="HOMOSERINE/4-DIPHOSPHOCYTIDYL-2-C-METHYL-D-ERYTHRITOL KINASE"/>
    <property type="match status" value="1"/>
</dbReference>
<dbReference type="Pfam" id="PF08544">
    <property type="entry name" value="GHMP_kinases_C"/>
    <property type="match status" value="1"/>
</dbReference>
<dbReference type="Pfam" id="PF00288">
    <property type="entry name" value="GHMP_kinases_N"/>
    <property type="match status" value="1"/>
</dbReference>
<dbReference type="PIRSF" id="PIRSF000676">
    <property type="entry name" value="Homoser_kin"/>
    <property type="match status" value="1"/>
</dbReference>
<dbReference type="PRINTS" id="PR00958">
    <property type="entry name" value="HOMSERKINASE"/>
</dbReference>
<dbReference type="SUPFAM" id="SSF55060">
    <property type="entry name" value="GHMP Kinase, C-terminal domain"/>
    <property type="match status" value="1"/>
</dbReference>
<dbReference type="SUPFAM" id="SSF54211">
    <property type="entry name" value="Ribosomal protein S5 domain 2-like"/>
    <property type="match status" value="1"/>
</dbReference>
<dbReference type="PROSITE" id="PS00627">
    <property type="entry name" value="GHMP_KINASES_ATP"/>
    <property type="match status" value="1"/>
</dbReference>
<evidence type="ECO:0000255" key="1">
    <source>
        <dbReference type="HAMAP-Rule" id="MF_00384"/>
    </source>
</evidence>
<accession>C3N8M1</accession>
<name>KHSE_SACI7</name>
<keyword id="KW-0028">Amino-acid biosynthesis</keyword>
<keyword id="KW-0067">ATP-binding</keyword>
<keyword id="KW-0963">Cytoplasm</keyword>
<keyword id="KW-0418">Kinase</keyword>
<keyword id="KW-0547">Nucleotide-binding</keyword>
<keyword id="KW-0791">Threonine biosynthesis</keyword>
<keyword id="KW-0808">Transferase</keyword>
<comment type="function">
    <text evidence="1">Catalyzes the ATP-dependent phosphorylation of L-homoserine to L-homoserine phosphate.</text>
</comment>
<comment type="catalytic activity">
    <reaction evidence="1">
        <text>L-homoserine + ATP = O-phospho-L-homoserine + ADP + H(+)</text>
        <dbReference type="Rhea" id="RHEA:13985"/>
        <dbReference type="ChEBI" id="CHEBI:15378"/>
        <dbReference type="ChEBI" id="CHEBI:30616"/>
        <dbReference type="ChEBI" id="CHEBI:57476"/>
        <dbReference type="ChEBI" id="CHEBI:57590"/>
        <dbReference type="ChEBI" id="CHEBI:456216"/>
        <dbReference type="EC" id="2.7.1.39"/>
    </reaction>
</comment>
<comment type="pathway">
    <text evidence="1">Amino-acid biosynthesis; L-threonine biosynthesis; L-threonine from L-aspartate: step 4/5.</text>
</comment>
<comment type="subcellular location">
    <subcellularLocation>
        <location evidence="1">Cytoplasm</location>
    </subcellularLocation>
</comment>
<comment type="similarity">
    <text evidence="1">Belongs to the GHMP kinase family. Homoserine kinase subfamily.</text>
</comment>
<reference key="1">
    <citation type="journal article" date="2009" name="Proc. Natl. Acad. Sci. U.S.A.">
        <title>Biogeography of the Sulfolobus islandicus pan-genome.</title>
        <authorList>
            <person name="Reno M.L."/>
            <person name="Held N.L."/>
            <person name="Fields C.J."/>
            <person name="Burke P.V."/>
            <person name="Whitaker R.J."/>
        </authorList>
    </citation>
    <scope>NUCLEOTIDE SEQUENCE [LARGE SCALE GENOMIC DNA]</scope>
    <source>
        <strain>Y.G.57.14 / Yellowstone #1</strain>
    </source>
</reference>
<organism>
    <name type="scientific">Saccharolobus islandicus (strain Y.G.57.14 / Yellowstone #1)</name>
    <name type="common">Sulfolobus islandicus</name>
    <dbReference type="NCBI Taxonomy" id="439386"/>
    <lineage>
        <taxon>Archaea</taxon>
        <taxon>Thermoproteota</taxon>
        <taxon>Thermoprotei</taxon>
        <taxon>Sulfolobales</taxon>
        <taxon>Sulfolobaceae</taxon>
        <taxon>Saccharolobus</taxon>
    </lineage>
</organism>
<proteinExistence type="inferred from homology"/>
<feature type="chain" id="PRO_1000205746" description="Homoserine kinase">
    <location>
        <begin position="1"/>
        <end position="311"/>
    </location>
</feature>
<feature type="binding site" evidence="1">
    <location>
        <begin position="88"/>
        <end position="98"/>
    </location>
    <ligand>
        <name>ATP</name>
        <dbReference type="ChEBI" id="CHEBI:30616"/>
    </ligand>
</feature>